<keyword id="KW-0235">DNA replication</keyword>
<keyword id="KW-0539">Nucleus</keyword>
<keyword id="KW-1185">Reference proteome</keyword>
<name>RMI1_XENLA</name>
<reference key="1">
    <citation type="submission" date="2004-07" db="EMBL/GenBank/DDBJ databases">
        <authorList>
            <consortium name="NIH - Xenopus Gene Collection (XGC) project"/>
        </authorList>
    </citation>
    <scope>NUCLEOTIDE SEQUENCE [LARGE SCALE MRNA]</scope>
    <source>
        <tissue>Oocyte</tissue>
    </source>
</reference>
<organism>
    <name type="scientific">Xenopus laevis</name>
    <name type="common">African clawed frog</name>
    <dbReference type="NCBI Taxonomy" id="8355"/>
    <lineage>
        <taxon>Eukaryota</taxon>
        <taxon>Metazoa</taxon>
        <taxon>Chordata</taxon>
        <taxon>Craniata</taxon>
        <taxon>Vertebrata</taxon>
        <taxon>Euteleostomi</taxon>
        <taxon>Amphibia</taxon>
        <taxon>Batrachia</taxon>
        <taxon>Anura</taxon>
        <taxon>Pipoidea</taxon>
        <taxon>Pipidae</taxon>
        <taxon>Xenopodinae</taxon>
        <taxon>Xenopus</taxon>
        <taxon>Xenopus</taxon>
    </lineage>
</organism>
<evidence type="ECO:0000250" key="1"/>
<evidence type="ECO:0000256" key="2">
    <source>
        <dbReference type="SAM" id="MobiDB-lite"/>
    </source>
</evidence>
<evidence type="ECO:0000305" key="3"/>
<accession>Q6DDH2</accession>
<sequence>MMATSGIANRVKTWLISTWHVKVPDPWLEACINWIQEENGSSLLQAEINKQVFEQWLLTDLRDLEFPVLPANITDSLKCELNGFHAVQMDSLVDISLPAYSQLQKLKGKDSTNEQVTCTTQQSQKPWEAKPTRMLMLQLTDGTQHIQAMEYRPIQALNANLSPGTKMVLQGTIVCRLGVLLLKPENVKVLGGEVEALVAEYTQTKVLSRLIGVEDNTVAQHSNVQEHAAGVAAGELGQALGPSDEDLLASLEENEEFSINNGVPSESGYYSRNENSSISSSTQHQTQDSIVRCWVDDDILEFSINNGVPSESGYYSRNENSSISSSTQHQTQDSIVRQTSFPMLDQTVVHVNVANNHAIEEQFDIDDELFLEEEIQRELEEMSMSQAEVTHGSTDLPTTLSATSHASSASCTSDQNNIDIPPYTYLSTILASKSRSITCVKLKSFIVTLNGNLSHSCGLWNIKAKISDGTGYLNVEFSDDVLTELIGFTVPEMKTLKKDPSQQSTLMEGLQKCQRMLTDFCGVMTVSYNPAKEEAVVLSLQDVTEEIMQSLQKLLRS</sequence>
<feature type="chain" id="PRO_0000361552" description="RecQ-mediated genome instability protein 1">
    <location>
        <begin position="1"/>
        <end position="557"/>
    </location>
</feature>
<feature type="region of interest" description="Disordered" evidence="2">
    <location>
        <begin position="259"/>
        <end position="284"/>
    </location>
</feature>
<feature type="region of interest" description="Disordered" evidence="2">
    <location>
        <begin position="310"/>
        <end position="329"/>
    </location>
</feature>
<feature type="region of interest" description="Disordered" evidence="2">
    <location>
        <begin position="382"/>
        <end position="413"/>
    </location>
</feature>
<feature type="compositionally biased region" description="Polar residues" evidence="2">
    <location>
        <begin position="259"/>
        <end position="275"/>
    </location>
</feature>
<feature type="compositionally biased region" description="Polar residues" evidence="2">
    <location>
        <begin position="310"/>
        <end position="320"/>
    </location>
</feature>
<feature type="compositionally biased region" description="Polar residues" evidence="2">
    <location>
        <begin position="383"/>
        <end position="397"/>
    </location>
</feature>
<feature type="compositionally biased region" description="Low complexity" evidence="2">
    <location>
        <begin position="398"/>
        <end position="413"/>
    </location>
</feature>
<proteinExistence type="evidence at transcript level"/>
<comment type="function">
    <text evidence="1">Essential component of the RMI complex, a complex that plays an important role in the processing of homologous recombination intermediates to limit DNA crossover formation in cells. Promotes TOP3A binding to double Holliday junctions (DHJ) and hence stimulates TOP3A-mediated dissolution. Required for BLM phosphorylation during mitosis. Within the BLM complex, required for BLM and TOP3A stability (By similarity).</text>
</comment>
<comment type="subunit">
    <text evidence="1">Component of the RMI complex, containing at least TOP3A, RMI1 and RMI2.</text>
</comment>
<comment type="subcellular location">
    <subcellularLocation>
        <location evidence="1">Nucleus</location>
    </subcellularLocation>
</comment>
<comment type="similarity">
    <text evidence="3">Belongs to the RMI1 family.</text>
</comment>
<dbReference type="EMBL" id="BC077592">
    <property type="protein sequence ID" value="AAH77592.1"/>
    <property type="molecule type" value="mRNA"/>
</dbReference>
<dbReference type="RefSeq" id="NP_001086875.1">
    <property type="nucleotide sequence ID" value="NM_001093406.1"/>
</dbReference>
<dbReference type="SMR" id="Q6DDH2"/>
<dbReference type="BioGRID" id="103570">
    <property type="interactions" value="1"/>
</dbReference>
<dbReference type="IntAct" id="Q6DDH2">
    <property type="interactions" value="1"/>
</dbReference>
<dbReference type="DNASU" id="446710"/>
<dbReference type="GeneID" id="446710"/>
<dbReference type="KEGG" id="xla:446710"/>
<dbReference type="AGR" id="Xenbase:XB-GENE-952474"/>
<dbReference type="CTD" id="446710"/>
<dbReference type="Xenbase" id="XB-GENE-952474">
    <property type="gene designation" value="rmi1.L"/>
</dbReference>
<dbReference type="OrthoDB" id="341511at2759"/>
<dbReference type="Proteomes" id="UP000186698">
    <property type="component" value="Chromosome 1L"/>
</dbReference>
<dbReference type="Bgee" id="446710">
    <property type="expression patterns" value="Expressed in egg cell and 11 other cell types or tissues"/>
</dbReference>
<dbReference type="GO" id="GO:0016604">
    <property type="term" value="C:nuclear body"/>
    <property type="evidence" value="ECO:0000318"/>
    <property type="project" value="GO_Central"/>
</dbReference>
<dbReference type="GO" id="GO:0031422">
    <property type="term" value="C:RecQ family helicase-topoisomerase III complex"/>
    <property type="evidence" value="ECO:0000318"/>
    <property type="project" value="GO_Central"/>
</dbReference>
<dbReference type="GO" id="GO:0000166">
    <property type="term" value="F:nucleotide binding"/>
    <property type="evidence" value="ECO:0007669"/>
    <property type="project" value="InterPro"/>
</dbReference>
<dbReference type="GO" id="GO:0006260">
    <property type="term" value="P:DNA replication"/>
    <property type="evidence" value="ECO:0007669"/>
    <property type="project" value="UniProtKB-KW"/>
</dbReference>
<dbReference type="GO" id="GO:0000724">
    <property type="term" value="P:double-strand break repair via homologous recombination"/>
    <property type="evidence" value="ECO:0000318"/>
    <property type="project" value="GO_Central"/>
</dbReference>
<dbReference type="GO" id="GO:0000712">
    <property type="term" value="P:resolution of meiotic recombination intermediates"/>
    <property type="evidence" value="ECO:0000318"/>
    <property type="project" value="GO_Central"/>
</dbReference>
<dbReference type="FunFam" id="1.10.8.1020:FF:000001">
    <property type="entry name" value="RecQ-mediated genome instability protein 1"/>
    <property type="match status" value="1"/>
</dbReference>
<dbReference type="FunFam" id="2.40.50.770:FF:000002">
    <property type="entry name" value="recQ-mediated genome instability protein 1"/>
    <property type="match status" value="1"/>
</dbReference>
<dbReference type="Gene3D" id="6.10.140.770">
    <property type="match status" value="1"/>
</dbReference>
<dbReference type="Gene3D" id="1.10.8.1020">
    <property type="entry name" value="RecQ-mediated genome instability protein 1, N-terminal domain"/>
    <property type="match status" value="1"/>
</dbReference>
<dbReference type="Gene3D" id="2.40.50.770">
    <property type="entry name" value="RecQ-mediated genome instability protein Rmi1, C-terminal domain"/>
    <property type="match status" value="1"/>
</dbReference>
<dbReference type="InterPro" id="IPR032199">
    <property type="entry name" value="RMI1_C"/>
</dbReference>
<dbReference type="InterPro" id="IPR049363">
    <property type="entry name" value="RMI1_N"/>
</dbReference>
<dbReference type="InterPro" id="IPR042470">
    <property type="entry name" value="RMI1_N_C_sf"/>
</dbReference>
<dbReference type="InterPro" id="IPR044881">
    <property type="entry name" value="RMI1_N_N_sf"/>
</dbReference>
<dbReference type="InterPro" id="IPR013894">
    <property type="entry name" value="RMI1_OB"/>
</dbReference>
<dbReference type="PANTHER" id="PTHR14790:SF15">
    <property type="entry name" value="RECQ-MEDIATED GENOME INSTABILITY PROTEIN 1"/>
    <property type="match status" value="1"/>
</dbReference>
<dbReference type="PANTHER" id="PTHR14790">
    <property type="entry name" value="RECQ-MEDIATED GENOME INSTABILITY PROTEIN 1 RMI1"/>
    <property type="match status" value="1"/>
</dbReference>
<dbReference type="Pfam" id="PF16099">
    <property type="entry name" value="RMI1_C"/>
    <property type="match status" value="1"/>
</dbReference>
<dbReference type="Pfam" id="PF08585">
    <property type="entry name" value="RMI1_N_C"/>
    <property type="match status" value="1"/>
</dbReference>
<dbReference type="Pfam" id="PF21000">
    <property type="entry name" value="RMI1_N_N"/>
    <property type="match status" value="1"/>
</dbReference>
<dbReference type="SMART" id="SM01161">
    <property type="entry name" value="DUF1767"/>
    <property type="match status" value="1"/>
</dbReference>
<protein>
    <recommendedName>
        <fullName>RecQ-mediated genome instability protein 1</fullName>
    </recommendedName>
</protein>
<gene>
    <name type="primary">rmi1</name>
</gene>